<protein>
    <recommendedName>
        <fullName evidence="1">UDP-N-acetylglucosamine 1-carboxyvinyltransferase 2</fullName>
        <ecNumber evidence="1">2.5.1.7</ecNumber>
    </recommendedName>
    <alternativeName>
        <fullName evidence="1">Enoylpyruvate transferase 2</fullName>
    </alternativeName>
    <alternativeName>
        <fullName evidence="1">UDP-N-acetylglucosamine enolpyruvyl transferase 2</fullName>
        <shortName evidence="1">EPT 2</shortName>
    </alternativeName>
</protein>
<dbReference type="EC" id="2.5.1.7" evidence="1"/>
<dbReference type="EMBL" id="AE009948">
    <property type="protein sequence ID" value="AAM99752.1"/>
    <property type="molecule type" value="Genomic_DNA"/>
</dbReference>
<dbReference type="RefSeq" id="NP_687880.1">
    <property type="nucleotide sequence ID" value="NC_004116.1"/>
</dbReference>
<dbReference type="SMR" id="Q8E069"/>
<dbReference type="STRING" id="208435.SAG0866"/>
<dbReference type="KEGG" id="sag:SAG0866"/>
<dbReference type="PATRIC" id="fig|208435.3.peg.873"/>
<dbReference type="HOGENOM" id="CLU_027387_0_0_9"/>
<dbReference type="OrthoDB" id="9803760at2"/>
<dbReference type="UniPathway" id="UPA00219"/>
<dbReference type="Proteomes" id="UP000000821">
    <property type="component" value="Chromosome"/>
</dbReference>
<dbReference type="GO" id="GO:0005737">
    <property type="term" value="C:cytoplasm"/>
    <property type="evidence" value="ECO:0007669"/>
    <property type="project" value="UniProtKB-SubCell"/>
</dbReference>
<dbReference type="GO" id="GO:0008760">
    <property type="term" value="F:UDP-N-acetylglucosamine 1-carboxyvinyltransferase activity"/>
    <property type="evidence" value="ECO:0007669"/>
    <property type="project" value="UniProtKB-UniRule"/>
</dbReference>
<dbReference type="GO" id="GO:0051301">
    <property type="term" value="P:cell division"/>
    <property type="evidence" value="ECO:0007669"/>
    <property type="project" value="UniProtKB-KW"/>
</dbReference>
<dbReference type="GO" id="GO:0071555">
    <property type="term" value="P:cell wall organization"/>
    <property type="evidence" value="ECO:0007669"/>
    <property type="project" value="UniProtKB-KW"/>
</dbReference>
<dbReference type="GO" id="GO:0009252">
    <property type="term" value="P:peptidoglycan biosynthetic process"/>
    <property type="evidence" value="ECO:0007669"/>
    <property type="project" value="UniProtKB-UniRule"/>
</dbReference>
<dbReference type="GO" id="GO:0008360">
    <property type="term" value="P:regulation of cell shape"/>
    <property type="evidence" value="ECO:0007669"/>
    <property type="project" value="UniProtKB-KW"/>
</dbReference>
<dbReference type="GO" id="GO:0019277">
    <property type="term" value="P:UDP-N-acetylgalactosamine biosynthetic process"/>
    <property type="evidence" value="ECO:0007669"/>
    <property type="project" value="InterPro"/>
</dbReference>
<dbReference type="CDD" id="cd01555">
    <property type="entry name" value="UdpNAET"/>
    <property type="match status" value="1"/>
</dbReference>
<dbReference type="FunFam" id="3.65.10.10:FF:000001">
    <property type="entry name" value="UDP-N-acetylglucosamine 1-carboxyvinyltransferase"/>
    <property type="match status" value="1"/>
</dbReference>
<dbReference type="Gene3D" id="3.65.10.10">
    <property type="entry name" value="Enolpyruvate transferase domain"/>
    <property type="match status" value="2"/>
</dbReference>
<dbReference type="HAMAP" id="MF_00111">
    <property type="entry name" value="MurA"/>
    <property type="match status" value="1"/>
</dbReference>
<dbReference type="InterPro" id="IPR001986">
    <property type="entry name" value="Enolpyruvate_Tfrase_dom"/>
</dbReference>
<dbReference type="InterPro" id="IPR036968">
    <property type="entry name" value="Enolpyruvate_Tfrase_sf"/>
</dbReference>
<dbReference type="InterPro" id="IPR050068">
    <property type="entry name" value="MurA_subfamily"/>
</dbReference>
<dbReference type="InterPro" id="IPR013792">
    <property type="entry name" value="RNA3'P_cycl/enolpyr_Trfase_a/b"/>
</dbReference>
<dbReference type="InterPro" id="IPR005750">
    <property type="entry name" value="UDP_GlcNAc_COvinyl_MurA"/>
</dbReference>
<dbReference type="NCBIfam" id="TIGR01072">
    <property type="entry name" value="murA"/>
    <property type="match status" value="1"/>
</dbReference>
<dbReference type="NCBIfam" id="NF006873">
    <property type="entry name" value="PRK09369.1"/>
    <property type="match status" value="1"/>
</dbReference>
<dbReference type="PANTHER" id="PTHR43783">
    <property type="entry name" value="UDP-N-ACETYLGLUCOSAMINE 1-CARBOXYVINYLTRANSFERASE"/>
    <property type="match status" value="1"/>
</dbReference>
<dbReference type="PANTHER" id="PTHR43783:SF1">
    <property type="entry name" value="UDP-N-ACETYLGLUCOSAMINE 1-CARBOXYVINYLTRANSFERASE"/>
    <property type="match status" value="1"/>
</dbReference>
<dbReference type="Pfam" id="PF00275">
    <property type="entry name" value="EPSP_synthase"/>
    <property type="match status" value="1"/>
</dbReference>
<dbReference type="SUPFAM" id="SSF55205">
    <property type="entry name" value="EPT/RTPC-like"/>
    <property type="match status" value="1"/>
</dbReference>
<gene>
    <name evidence="1" type="primary">murA2</name>
    <name type="synonym">murA-2</name>
    <name type="ordered locus">SAG0866</name>
</gene>
<organism>
    <name type="scientific">Streptococcus agalactiae serotype V (strain ATCC BAA-611 / 2603 V/R)</name>
    <dbReference type="NCBI Taxonomy" id="208435"/>
    <lineage>
        <taxon>Bacteria</taxon>
        <taxon>Bacillati</taxon>
        <taxon>Bacillota</taxon>
        <taxon>Bacilli</taxon>
        <taxon>Lactobacillales</taxon>
        <taxon>Streptococcaceae</taxon>
        <taxon>Streptococcus</taxon>
    </lineage>
</organism>
<proteinExistence type="inferred from homology"/>
<sequence>MDKIIVEGGQTQLQGQVVIEGAKNAVLPLLAATILPSQGKTLLTNVPILSDVFTMNNVVRGLDIQVDFNCDKKEILVDASGDILDVAPYEFVSQMRASIVVLGPILARNGHAKVSMPGGCTIGSRPIDLHLKGLEAMGATITQNGGDITAQAEKLKGANIYMDFPSVGATQNLMMAATLASGTTTIENAAREPEIVDLAQLLNKMGAKVKGAGTETLTIIGVDALHGTEHDVVQDRIEAGTFMVAAAMTSGNVLVKDAIWEHNRPLISKLMEMGVEVSEEEDGIRVKADTKKLKPVTVKTLPHPGFPTDMQAQFTALMAVVNGESTMIETVFENRFQHLEEMRRMGLQTEILRDTAMIHGGRALQGAPVMSTDLRASAALILAGMVAQGQTVVGQLTHLDRGYYQFHEKLAALGANIKRVSEA</sequence>
<accession>Q8E069</accession>
<reference key="1">
    <citation type="journal article" date="2002" name="Proc. Natl. Acad. Sci. U.S.A.">
        <title>Complete genome sequence and comparative genomic analysis of an emerging human pathogen, serotype V Streptococcus agalactiae.</title>
        <authorList>
            <person name="Tettelin H."/>
            <person name="Masignani V."/>
            <person name="Cieslewicz M.J."/>
            <person name="Eisen J.A."/>
            <person name="Peterson S.N."/>
            <person name="Wessels M.R."/>
            <person name="Paulsen I.T."/>
            <person name="Nelson K.E."/>
            <person name="Margarit I."/>
            <person name="Read T.D."/>
            <person name="Madoff L.C."/>
            <person name="Wolf A.M."/>
            <person name="Beanan M.J."/>
            <person name="Brinkac L.M."/>
            <person name="Daugherty S.C."/>
            <person name="DeBoy R.T."/>
            <person name="Durkin A.S."/>
            <person name="Kolonay J.F."/>
            <person name="Madupu R."/>
            <person name="Lewis M.R."/>
            <person name="Radune D."/>
            <person name="Fedorova N.B."/>
            <person name="Scanlan D."/>
            <person name="Khouri H.M."/>
            <person name="Mulligan S."/>
            <person name="Carty H.A."/>
            <person name="Cline R.T."/>
            <person name="Van Aken S.E."/>
            <person name="Gill J."/>
            <person name="Scarselli M."/>
            <person name="Mora M."/>
            <person name="Iacobini E.T."/>
            <person name="Brettoni C."/>
            <person name="Galli G."/>
            <person name="Mariani M."/>
            <person name="Vegni F."/>
            <person name="Maione D."/>
            <person name="Rinaudo D."/>
            <person name="Rappuoli R."/>
            <person name="Telford J.L."/>
            <person name="Kasper D.L."/>
            <person name="Grandi G."/>
            <person name="Fraser C.M."/>
        </authorList>
    </citation>
    <scope>NUCLEOTIDE SEQUENCE [LARGE SCALE GENOMIC DNA]</scope>
    <source>
        <strain>ATCC BAA-611 / 2603 V/R</strain>
    </source>
</reference>
<comment type="function">
    <text evidence="1">Cell wall formation. Adds enolpyruvyl to UDP-N-acetylglucosamine.</text>
</comment>
<comment type="catalytic activity">
    <reaction evidence="1">
        <text>phosphoenolpyruvate + UDP-N-acetyl-alpha-D-glucosamine = UDP-N-acetyl-3-O-(1-carboxyvinyl)-alpha-D-glucosamine + phosphate</text>
        <dbReference type="Rhea" id="RHEA:18681"/>
        <dbReference type="ChEBI" id="CHEBI:43474"/>
        <dbReference type="ChEBI" id="CHEBI:57705"/>
        <dbReference type="ChEBI" id="CHEBI:58702"/>
        <dbReference type="ChEBI" id="CHEBI:68483"/>
        <dbReference type="EC" id="2.5.1.7"/>
    </reaction>
</comment>
<comment type="pathway">
    <text evidence="1">Cell wall biogenesis; peptidoglycan biosynthesis.</text>
</comment>
<comment type="subcellular location">
    <subcellularLocation>
        <location evidence="1">Cytoplasm</location>
    </subcellularLocation>
</comment>
<comment type="similarity">
    <text evidence="1">Belongs to the EPSP synthase family. MurA subfamily.</text>
</comment>
<feature type="chain" id="PRO_0000231276" description="UDP-N-acetylglucosamine 1-carboxyvinyltransferase 2">
    <location>
        <begin position="1"/>
        <end position="423"/>
    </location>
</feature>
<feature type="active site" description="Proton donor" evidence="1">
    <location>
        <position position="120"/>
    </location>
</feature>
<feature type="binding site" evidence="1">
    <location>
        <begin position="23"/>
        <end position="24"/>
    </location>
    <ligand>
        <name>phosphoenolpyruvate</name>
        <dbReference type="ChEBI" id="CHEBI:58702"/>
    </ligand>
</feature>
<feature type="binding site" evidence="1">
    <location>
        <position position="96"/>
    </location>
    <ligand>
        <name>UDP-N-acetyl-alpha-D-glucosamine</name>
        <dbReference type="ChEBI" id="CHEBI:57705"/>
    </ligand>
</feature>
<feature type="binding site" evidence="1">
    <location>
        <begin position="125"/>
        <end position="129"/>
    </location>
    <ligand>
        <name>UDP-N-acetyl-alpha-D-glucosamine</name>
        <dbReference type="ChEBI" id="CHEBI:57705"/>
    </ligand>
</feature>
<feature type="binding site" evidence="1">
    <location>
        <position position="309"/>
    </location>
    <ligand>
        <name>UDP-N-acetyl-alpha-D-glucosamine</name>
        <dbReference type="ChEBI" id="CHEBI:57705"/>
    </ligand>
</feature>
<feature type="binding site" evidence="1">
    <location>
        <position position="331"/>
    </location>
    <ligand>
        <name>UDP-N-acetyl-alpha-D-glucosamine</name>
        <dbReference type="ChEBI" id="CHEBI:57705"/>
    </ligand>
</feature>
<feature type="modified residue" description="2-(S-cysteinyl)pyruvic acid O-phosphothioketal" evidence="1">
    <location>
        <position position="120"/>
    </location>
</feature>
<name>MURA2_STRA5</name>
<keyword id="KW-0131">Cell cycle</keyword>
<keyword id="KW-0132">Cell division</keyword>
<keyword id="KW-0133">Cell shape</keyword>
<keyword id="KW-0961">Cell wall biogenesis/degradation</keyword>
<keyword id="KW-0963">Cytoplasm</keyword>
<keyword id="KW-0573">Peptidoglycan synthesis</keyword>
<keyword id="KW-0670">Pyruvate</keyword>
<keyword id="KW-1185">Reference proteome</keyword>
<keyword id="KW-0808">Transferase</keyword>
<evidence type="ECO:0000255" key="1">
    <source>
        <dbReference type="HAMAP-Rule" id="MF_00111"/>
    </source>
</evidence>